<protein>
    <recommendedName>
        <fullName evidence="1">NADH-quinone oxidoreductase subunit N</fullName>
        <ecNumber evidence="1">7.1.1.-</ecNumber>
    </recommendedName>
    <alternativeName>
        <fullName evidence="1">NADH dehydrogenase I subunit N</fullName>
    </alternativeName>
    <alternativeName>
        <fullName evidence="1">NDH-1 subunit N</fullName>
    </alternativeName>
</protein>
<comment type="function">
    <text evidence="1">NDH-1 shuttles electrons from NADH, via FMN and iron-sulfur (Fe-S) centers, to quinones in the respiratory chain. The immediate electron acceptor for the enzyme in this species is believed to be ubiquinone. Couples the redox reaction to proton translocation (for every two electrons transferred, four hydrogen ions are translocated across the cytoplasmic membrane), and thus conserves the redox energy in a proton gradient.</text>
</comment>
<comment type="catalytic activity">
    <reaction evidence="1">
        <text>a quinone + NADH + 5 H(+)(in) = a quinol + NAD(+) + 4 H(+)(out)</text>
        <dbReference type="Rhea" id="RHEA:57888"/>
        <dbReference type="ChEBI" id="CHEBI:15378"/>
        <dbReference type="ChEBI" id="CHEBI:24646"/>
        <dbReference type="ChEBI" id="CHEBI:57540"/>
        <dbReference type="ChEBI" id="CHEBI:57945"/>
        <dbReference type="ChEBI" id="CHEBI:132124"/>
    </reaction>
</comment>
<comment type="subunit">
    <text evidence="1">NDH-1 is composed of 13 different subunits. Subunits NuoA, H, J, K, L, M, N constitute the membrane sector of the complex.</text>
</comment>
<comment type="subcellular location">
    <subcellularLocation>
        <location evidence="1">Cell inner membrane</location>
        <topology evidence="1">Multi-pass membrane protein</topology>
    </subcellularLocation>
</comment>
<comment type="similarity">
    <text evidence="1">Belongs to the complex I subunit 2 family.</text>
</comment>
<evidence type="ECO:0000255" key="1">
    <source>
        <dbReference type="HAMAP-Rule" id="MF_00445"/>
    </source>
</evidence>
<sequence>MTITPQQLIALLPLLIVGLTVVVVMLSIAWRRDHFINTTLTVIGLNLALLSLYFVGQQEAMDVTPLVHVDRYAMLYIGLVLVASLATATFAYSWLENYPDNKEEFYLLVLIATVGGILLACANHLASLFIGIELLTLPLFGLIGYAYRQKRSLEAAIKYMLLSAAASSFMLFGIALLYAESGDLSFAALGHRLSDSYIYQPLILSGLGMLVVGLGFKLSLVPFHLWTPDVYQGAPAPVSTFLATASKIAIFAVVIRLFVEAPMADSEALRTVLTVIAIASMLFGNLMALTQTNIKRLLGYSSIAHLGYLLVALVAVQNHQLSEETVGIYLAGYLFSSIGAFGVVSLMSSPYKGPDADSLYSYRGLFWHKPILSAVMTVMMLSLAGIPMTFGFIGKFYVIVLGVKAELWWLTGAVVVGSAIGLYYYLRVMVSLYLPAPKALNRDTPRNWASTAGGMVVLISALLVLALGIWPQPLIDVIQQAKIIL</sequence>
<gene>
    <name evidence="1" type="primary">nuoN</name>
    <name type="ordered locus">plu3077</name>
</gene>
<dbReference type="EC" id="7.1.1.-" evidence="1"/>
<dbReference type="EMBL" id="BX571869">
    <property type="protein sequence ID" value="CAE15451.1"/>
    <property type="molecule type" value="Genomic_DNA"/>
</dbReference>
<dbReference type="RefSeq" id="WP_011147294.1">
    <property type="nucleotide sequence ID" value="NC_005126.1"/>
</dbReference>
<dbReference type="SMR" id="Q7N2J9"/>
<dbReference type="STRING" id="243265.plu3077"/>
<dbReference type="GeneID" id="48849338"/>
<dbReference type="KEGG" id="plu:plu3077"/>
<dbReference type="eggNOG" id="COG1007">
    <property type="taxonomic scope" value="Bacteria"/>
</dbReference>
<dbReference type="HOGENOM" id="CLU_007100_1_5_6"/>
<dbReference type="OrthoDB" id="9768329at2"/>
<dbReference type="Proteomes" id="UP000002514">
    <property type="component" value="Chromosome"/>
</dbReference>
<dbReference type="GO" id="GO:0005886">
    <property type="term" value="C:plasma membrane"/>
    <property type="evidence" value="ECO:0007669"/>
    <property type="project" value="UniProtKB-SubCell"/>
</dbReference>
<dbReference type="GO" id="GO:0008137">
    <property type="term" value="F:NADH dehydrogenase (ubiquinone) activity"/>
    <property type="evidence" value="ECO:0007669"/>
    <property type="project" value="InterPro"/>
</dbReference>
<dbReference type="GO" id="GO:0050136">
    <property type="term" value="F:NADH:ubiquinone reductase (non-electrogenic) activity"/>
    <property type="evidence" value="ECO:0007669"/>
    <property type="project" value="UniProtKB-UniRule"/>
</dbReference>
<dbReference type="GO" id="GO:0048038">
    <property type="term" value="F:quinone binding"/>
    <property type="evidence" value="ECO:0007669"/>
    <property type="project" value="UniProtKB-KW"/>
</dbReference>
<dbReference type="GO" id="GO:0042773">
    <property type="term" value="P:ATP synthesis coupled electron transport"/>
    <property type="evidence" value="ECO:0007669"/>
    <property type="project" value="InterPro"/>
</dbReference>
<dbReference type="HAMAP" id="MF_00445">
    <property type="entry name" value="NDH1_NuoN_1"/>
    <property type="match status" value="1"/>
</dbReference>
<dbReference type="InterPro" id="IPR010096">
    <property type="entry name" value="NADH-Q_OxRdtase_suN/2"/>
</dbReference>
<dbReference type="InterPro" id="IPR001750">
    <property type="entry name" value="ND/Mrp_TM"/>
</dbReference>
<dbReference type="NCBIfam" id="TIGR01770">
    <property type="entry name" value="NDH_I_N"/>
    <property type="match status" value="1"/>
</dbReference>
<dbReference type="NCBIfam" id="NF004439">
    <property type="entry name" value="PRK05777.1-1"/>
    <property type="match status" value="1"/>
</dbReference>
<dbReference type="PANTHER" id="PTHR22773">
    <property type="entry name" value="NADH DEHYDROGENASE"/>
    <property type="match status" value="1"/>
</dbReference>
<dbReference type="Pfam" id="PF00361">
    <property type="entry name" value="Proton_antipo_M"/>
    <property type="match status" value="1"/>
</dbReference>
<name>NUON_PHOLL</name>
<organism>
    <name type="scientific">Photorhabdus laumondii subsp. laumondii (strain DSM 15139 / CIP 105565 / TT01)</name>
    <name type="common">Photorhabdus luminescens subsp. laumondii</name>
    <dbReference type="NCBI Taxonomy" id="243265"/>
    <lineage>
        <taxon>Bacteria</taxon>
        <taxon>Pseudomonadati</taxon>
        <taxon>Pseudomonadota</taxon>
        <taxon>Gammaproteobacteria</taxon>
        <taxon>Enterobacterales</taxon>
        <taxon>Morganellaceae</taxon>
        <taxon>Photorhabdus</taxon>
    </lineage>
</organism>
<accession>Q7N2J9</accession>
<proteinExistence type="inferred from homology"/>
<feature type="chain" id="PRO_0000249444" description="NADH-quinone oxidoreductase subunit N">
    <location>
        <begin position="1"/>
        <end position="485"/>
    </location>
</feature>
<feature type="transmembrane region" description="Helical" evidence="1">
    <location>
        <begin position="8"/>
        <end position="28"/>
    </location>
</feature>
<feature type="transmembrane region" description="Helical" evidence="1">
    <location>
        <begin position="35"/>
        <end position="55"/>
    </location>
</feature>
<feature type="transmembrane region" description="Helical" evidence="1">
    <location>
        <begin position="75"/>
        <end position="95"/>
    </location>
</feature>
<feature type="transmembrane region" description="Helical" evidence="1">
    <location>
        <begin position="104"/>
        <end position="124"/>
    </location>
</feature>
<feature type="transmembrane region" description="Helical" evidence="1">
    <location>
        <begin position="125"/>
        <end position="145"/>
    </location>
</feature>
<feature type="transmembrane region" description="Helical" evidence="1">
    <location>
        <begin position="159"/>
        <end position="179"/>
    </location>
</feature>
<feature type="transmembrane region" description="Helical" evidence="1">
    <location>
        <begin position="203"/>
        <end position="223"/>
    </location>
</feature>
<feature type="transmembrane region" description="Helical" evidence="1">
    <location>
        <begin position="235"/>
        <end position="255"/>
    </location>
</feature>
<feature type="transmembrane region" description="Helical" evidence="1">
    <location>
        <begin position="271"/>
        <end position="291"/>
    </location>
</feature>
<feature type="transmembrane region" description="Helical" evidence="1">
    <location>
        <begin position="297"/>
        <end position="317"/>
    </location>
</feature>
<feature type="transmembrane region" description="Helical" evidence="1">
    <location>
        <begin position="326"/>
        <end position="346"/>
    </location>
</feature>
<feature type="transmembrane region" description="Helical" evidence="1">
    <location>
        <begin position="383"/>
        <end position="403"/>
    </location>
</feature>
<feature type="transmembrane region" description="Helical" evidence="1">
    <location>
        <begin position="406"/>
        <end position="426"/>
    </location>
</feature>
<feature type="transmembrane region" description="Helical" evidence="1">
    <location>
        <begin position="455"/>
        <end position="475"/>
    </location>
</feature>
<reference key="1">
    <citation type="journal article" date="2003" name="Nat. Biotechnol.">
        <title>The genome sequence of the entomopathogenic bacterium Photorhabdus luminescens.</title>
        <authorList>
            <person name="Duchaud E."/>
            <person name="Rusniok C."/>
            <person name="Frangeul L."/>
            <person name="Buchrieser C."/>
            <person name="Givaudan A."/>
            <person name="Taourit S."/>
            <person name="Bocs S."/>
            <person name="Boursaux-Eude C."/>
            <person name="Chandler M."/>
            <person name="Charles J.-F."/>
            <person name="Dassa E."/>
            <person name="Derose R."/>
            <person name="Derzelle S."/>
            <person name="Freyssinet G."/>
            <person name="Gaudriault S."/>
            <person name="Medigue C."/>
            <person name="Lanois A."/>
            <person name="Powell K."/>
            <person name="Siguier P."/>
            <person name="Vincent R."/>
            <person name="Wingate V."/>
            <person name="Zouine M."/>
            <person name="Glaser P."/>
            <person name="Boemare N."/>
            <person name="Danchin A."/>
            <person name="Kunst F."/>
        </authorList>
    </citation>
    <scope>NUCLEOTIDE SEQUENCE [LARGE SCALE GENOMIC DNA]</scope>
    <source>
        <strain>DSM 15139 / CIP 105565 / TT01</strain>
    </source>
</reference>
<keyword id="KW-0997">Cell inner membrane</keyword>
<keyword id="KW-1003">Cell membrane</keyword>
<keyword id="KW-0472">Membrane</keyword>
<keyword id="KW-0520">NAD</keyword>
<keyword id="KW-0874">Quinone</keyword>
<keyword id="KW-1185">Reference proteome</keyword>
<keyword id="KW-1278">Translocase</keyword>
<keyword id="KW-0812">Transmembrane</keyword>
<keyword id="KW-1133">Transmembrane helix</keyword>
<keyword id="KW-0813">Transport</keyword>
<keyword id="KW-0830">Ubiquinone</keyword>